<proteinExistence type="inferred from homology"/>
<organism>
    <name type="scientific">Escherichia coli O6:K15:H31 (strain 536 / UPEC)</name>
    <dbReference type="NCBI Taxonomy" id="362663"/>
    <lineage>
        <taxon>Bacteria</taxon>
        <taxon>Pseudomonadati</taxon>
        <taxon>Pseudomonadota</taxon>
        <taxon>Gammaproteobacteria</taxon>
        <taxon>Enterobacterales</taxon>
        <taxon>Enterobacteriaceae</taxon>
        <taxon>Escherichia</taxon>
    </lineage>
</organism>
<protein>
    <recommendedName>
        <fullName evidence="1">D-serine dehydratase 1</fullName>
        <ecNumber evidence="1">4.3.1.18</ecNumber>
    </recommendedName>
    <alternativeName>
        <fullName evidence="1">D-serine deaminase 1</fullName>
        <shortName evidence="1">DSD 1</shortName>
    </alternativeName>
</protein>
<accession>Q0TF95</accession>
<feature type="chain" id="PRO_0000291729" description="D-serine dehydratase 1">
    <location>
        <begin position="1"/>
        <end position="442"/>
    </location>
</feature>
<feature type="modified residue" description="N6-(pyridoxal phosphate)lysine" evidence="1">
    <location>
        <position position="118"/>
    </location>
</feature>
<keyword id="KW-0456">Lyase</keyword>
<keyword id="KW-0663">Pyridoxal phosphate</keyword>
<reference key="1">
    <citation type="journal article" date="2006" name="Mol. Microbiol.">
        <title>Role of pathogenicity island-associated integrases in the genome plasticity of uropathogenic Escherichia coli strain 536.</title>
        <authorList>
            <person name="Hochhut B."/>
            <person name="Wilde C."/>
            <person name="Balling G."/>
            <person name="Middendorf B."/>
            <person name="Dobrindt U."/>
            <person name="Brzuszkiewicz E."/>
            <person name="Gottschalk G."/>
            <person name="Carniel E."/>
            <person name="Hacker J."/>
        </authorList>
    </citation>
    <scope>NUCLEOTIDE SEQUENCE [LARGE SCALE GENOMIC DNA]</scope>
    <source>
        <strain>536 / UPEC</strain>
    </source>
</reference>
<dbReference type="EC" id="4.3.1.18" evidence="1"/>
<dbReference type="EMBL" id="CP000247">
    <property type="protein sequence ID" value="ABG70384.1"/>
    <property type="molecule type" value="Genomic_DNA"/>
</dbReference>
<dbReference type="SMR" id="Q0TF95"/>
<dbReference type="KEGG" id="ecp:ECP_2391"/>
<dbReference type="HOGENOM" id="CLU_035707_0_0_6"/>
<dbReference type="Proteomes" id="UP000009182">
    <property type="component" value="Chromosome"/>
</dbReference>
<dbReference type="GO" id="GO:0008721">
    <property type="term" value="F:D-serine ammonia-lyase activity"/>
    <property type="evidence" value="ECO:0007669"/>
    <property type="project" value="UniProtKB-EC"/>
</dbReference>
<dbReference type="GO" id="GO:0016836">
    <property type="term" value="F:hydro-lyase activity"/>
    <property type="evidence" value="ECO:0007669"/>
    <property type="project" value="UniProtKB-UniRule"/>
</dbReference>
<dbReference type="GO" id="GO:0030170">
    <property type="term" value="F:pyridoxal phosphate binding"/>
    <property type="evidence" value="ECO:0007669"/>
    <property type="project" value="InterPro"/>
</dbReference>
<dbReference type="GO" id="GO:0036088">
    <property type="term" value="P:D-serine catabolic process"/>
    <property type="evidence" value="ECO:0007669"/>
    <property type="project" value="TreeGrafter"/>
</dbReference>
<dbReference type="GO" id="GO:0009097">
    <property type="term" value="P:isoleucine biosynthetic process"/>
    <property type="evidence" value="ECO:0007669"/>
    <property type="project" value="TreeGrafter"/>
</dbReference>
<dbReference type="CDD" id="cd06447">
    <property type="entry name" value="D-Ser-dehyd"/>
    <property type="match status" value="1"/>
</dbReference>
<dbReference type="FunFam" id="3.40.50.1100:FF:000018">
    <property type="entry name" value="D-serine dehydratase"/>
    <property type="match status" value="1"/>
</dbReference>
<dbReference type="Gene3D" id="3.40.50.1100">
    <property type="match status" value="2"/>
</dbReference>
<dbReference type="HAMAP" id="MF_01030">
    <property type="entry name" value="D_Ser_dehydrat"/>
    <property type="match status" value="1"/>
</dbReference>
<dbReference type="InterPro" id="IPR011780">
    <property type="entry name" value="D_Ser_am_lyase"/>
</dbReference>
<dbReference type="InterPro" id="IPR050147">
    <property type="entry name" value="Ser/Thr_Dehydratase"/>
</dbReference>
<dbReference type="InterPro" id="IPR000634">
    <property type="entry name" value="Ser/Thr_deHydtase_PyrdxlP-BS"/>
</dbReference>
<dbReference type="InterPro" id="IPR001926">
    <property type="entry name" value="TrpB-like_PALP"/>
</dbReference>
<dbReference type="InterPro" id="IPR036052">
    <property type="entry name" value="TrpB-like_PALP_sf"/>
</dbReference>
<dbReference type="NCBIfam" id="TIGR02035">
    <property type="entry name" value="D_Ser_am_lyase"/>
    <property type="match status" value="1"/>
</dbReference>
<dbReference type="NCBIfam" id="NF002823">
    <property type="entry name" value="PRK02991.1"/>
    <property type="match status" value="1"/>
</dbReference>
<dbReference type="PANTHER" id="PTHR48078:SF9">
    <property type="entry name" value="D-SERINE DEHYDRATASE"/>
    <property type="match status" value="1"/>
</dbReference>
<dbReference type="PANTHER" id="PTHR48078">
    <property type="entry name" value="THREONINE DEHYDRATASE, MITOCHONDRIAL-RELATED"/>
    <property type="match status" value="1"/>
</dbReference>
<dbReference type="Pfam" id="PF00291">
    <property type="entry name" value="PALP"/>
    <property type="match status" value="1"/>
</dbReference>
<dbReference type="SUPFAM" id="SSF53686">
    <property type="entry name" value="Tryptophan synthase beta subunit-like PLP-dependent enzymes"/>
    <property type="match status" value="1"/>
</dbReference>
<dbReference type="PROSITE" id="PS00165">
    <property type="entry name" value="DEHYDRATASE_SER_THR"/>
    <property type="match status" value="1"/>
</dbReference>
<gene>
    <name evidence="1" type="primary">dsdA1</name>
    <name type="ordered locus">ECP_2391</name>
</gene>
<comment type="catalytic activity">
    <reaction evidence="1">
        <text>D-serine = pyruvate + NH4(+)</text>
        <dbReference type="Rhea" id="RHEA:13977"/>
        <dbReference type="ChEBI" id="CHEBI:15361"/>
        <dbReference type="ChEBI" id="CHEBI:28938"/>
        <dbReference type="ChEBI" id="CHEBI:35247"/>
        <dbReference type="EC" id="4.3.1.18"/>
    </reaction>
</comment>
<comment type="cofactor">
    <cofactor evidence="1">
        <name>pyridoxal 5'-phosphate</name>
        <dbReference type="ChEBI" id="CHEBI:597326"/>
    </cofactor>
</comment>
<comment type="subunit">
    <text evidence="1">Monomer.</text>
</comment>
<comment type="similarity">
    <text evidence="1">Belongs to the serine/threonine dehydratase family. DsdA subfamily.</text>
</comment>
<sequence>MENAKMNSLIAQYPLVKDLVALQETTWFNPGTTSLAEGLPYVGLTEQDVQDAHARLSRFAPYLAKAFPETAATGGIIESELVAIPAMQKRLEKEYHQPIAGQLLLKKDSHLPISGSIKARGGIYEVLAHAEKLALEAGLLTLEDDYSKLLSPEFKQFFSQYSIAVGSTGNLGLSIGIMSARIGFKVTVHMSADARAWKKAKLRSHGVTVVEYEQDYGVAVEEGRKAAQSDPNCFFIDDENSRTLFLGYSVAGQRLKAQFAQQGRIVNADNPLFVYLPCGVGGGPGGVAFGLKLAFGDHVHCFFAEPTHSPCMLLGVHTGLHDQISVQDIGIDNLTAADGLAVGRASGFVGRAMERLLDGFYTLSDQTMYDMLGWLAQEEGIRLEPSALAGMAGPQRVCASVSYQQLHGFSAEQLRNATHLVWATGGGMVPEEEMNQYLAKGR</sequence>
<evidence type="ECO:0000255" key="1">
    <source>
        <dbReference type="HAMAP-Rule" id="MF_01030"/>
    </source>
</evidence>
<name>SDHD1_ECOL5</name>